<protein>
    <recommendedName>
        <fullName evidence="1">Alanine--tRNA ligase</fullName>
        <ecNumber evidence="1">6.1.1.7</ecNumber>
    </recommendedName>
    <alternativeName>
        <fullName evidence="1">Alanyl-tRNA synthetase</fullName>
        <shortName evidence="1">AlaRS</shortName>
    </alternativeName>
</protein>
<accession>P0DG24</accession>
<accession>Q878X3</accession>
<accession>Q8K700</accession>
<evidence type="ECO:0000255" key="1">
    <source>
        <dbReference type="HAMAP-Rule" id="MF_00036"/>
    </source>
</evidence>
<evidence type="ECO:0000305" key="2"/>
<comment type="function">
    <text evidence="1">Catalyzes the attachment of alanine to tRNA(Ala) in a two-step reaction: alanine is first activated by ATP to form Ala-AMP and then transferred to the acceptor end of tRNA(Ala). Also edits incorrectly charged Ser-tRNA(Ala) and Gly-tRNA(Ala) via its editing domain.</text>
</comment>
<comment type="catalytic activity">
    <reaction evidence="1">
        <text>tRNA(Ala) + L-alanine + ATP = L-alanyl-tRNA(Ala) + AMP + diphosphate</text>
        <dbReference type="Rhea" id="RHEA:12540"/>
        <dbReference type="Rhea" id="RHEA-COMP:9657"/>
        <dbReference type="Rhea" id="RHEA-COMP:9923"/>
        <dbReference type="ChEBI" id="CHEBI:30616"/>
        <dbReference type="ChEBI" id="CHEBI:33019"/>
        <dbReference type="ChEBI" id="CHEBI:57972"/>
        <dbReference type="ChEBI" id="CHEBI:78442"/>
        <dbReference type="ChEBI" id="CHEBI:78497"/>
        <dbReference type="ChEBI" id="CHEBI:456215"/>
        <dbReference type="EC" id="6.1.1.7"/>
    </reaction>
</comment>
<comment type="cofactor">
    <cofactor evidence="1">
        <name>Zn(2+)</name>
        <dbReference type="ChEBI" id="CHEBI:29105"/>
    </cofactor>
    <text evidence="1">Binds 1 zinc ion per subunit.</text>
</comment>
<comment type="subcellular location">
    <subcellularLocation>
        <location evidence="1">Cytoplasm</location>
    </subcellularLocation>
</comment>
<comment type="domain">
    <text evidence="1">Consists of three domains; the N-terminal catalytic domain, the editing domain and the C-terminal C-Ala domain. The editing domain removes incorrectly charged amino acids, while the C-Ala domain, along with tRNA(Ala), serves as a bridge to cooperatively bring together the editing and aminoacylation centers thus stimulating deacylation of misacylated tRNAs.</text>
</comment>
<comment type="similarity">
    <text evidence="1">Belongs to the class-II aminoacyl-tRNA synthetase family.</text>
</comment>
<comment type="sequence caution" evidence="2">
    <conflict type="erroneous initiation">
        <sequence resource="EMBL-CDS" id="AAM79665"/>
    </conflict>
</comment>
<proteinExistence type="inferred from homology"/>
<feature type="chain" id="PRO_0000075219" description="Alanine--tRNA ligase">
    <location>
        <begin position="1"/>
        <end position="872"/>
    </location>
</feature>
<feature type="binding site" evidence="1">
    <location>
        <position position="567"/>
    </location>
    <ligand>
        <name>Zn(2+)</name>
        <dbReference type="ChEBI" id="CHEBI:29105"/>
    </ligand>
</feature>
<feature type="binding site" evidence="1">
    <location>
        <position position="571"/>
    </location>
    <ligand>
        <name>Zn(2+)</name>
        <dbReference type="ChEBI" id="CHEBI:29105"/>
    </ligand>
</feature>
<feature type="binding site" evidence="1">
    <location>
        <position position="669"/>
    </location>
    <ligand>
        <name>Zn(2+)</name>
        <dbReference type="ChEBI" id="CHEBI:29105"/>
    </ligand>
</feature>
<feature type="binding site" evidence="1">
    <location>
        <position position="673"/>
    </location>
    <ligand>
        <name>Zn(2+)</name>
        <dbReference type="ChEBI" id="CHEBI:29105"/>
    </ligand>
</feature>
<reference key="1">
    <citation type="journal article" date="2002" name="Proc. Natl. Acad. Sci. U.S.A.">
        <title>Genome sequence of a serotype M3 strain of group A Streptococcus: phage-encoded toxins, the high-virulence phenotype, and clone emergence.</title>
        <authorList>
            <person name="Beres S.B."/>
            <person name="Sylva G.L."/>
            <person name="Barbian K.D."/>
            <person name="Lei B."/>
            <person name="Hoff J.S."/>
            <person name="Mammarella N.D."/>
            <person name="Liu M.-Y."/>
            <person name="Smoot J.C."/>
            <person name="Porcella S.F."/>
            <person name="Parkins L.D."/>
            <person name="Campbell D.S."/>
            <person name="Smith T.M."/>
            <person name="McCormick J.K."/>
            <person name="Leung D.Y.M."/>
            <person name="Schlievert P.M."/>
            <person name="Musser J.M."/>
        </authorList>
    </citation>
    <scope>NUCLEOTIDE SEQUENCE [LARGE SCALE GENOMIC DNA]</scope>
    <source>
        <strain>ATCC BAA-595 / MGAS315</strain>
    </source>
</reference>
<name>SYA_STRP3</name>
<organism>
    <name type="scientific">Streptococcus pyogenes serotype M3 (strain ATCC BAA-595 / MGAS315)</name>
    <dbReference type="NCBI Taxonomy" id="198466"/>
    <lineage>
        <taxon>Bacteria</taxon>
        <taxon>Bacillati</taxon>
        <taxon>Bacillota</taxon>
        <taxon>Bacilli</taxon>
        <taxon>Lactobacillales</taxon>
        <taxon>Streptococcaceae</taxon>
        <taxon>Streptococcus</taxon>
    </lineage>
</organism>
<gene>
    <name evidence="1" type="primary">alaS</name>
    <name type="ordered locus">SpyM3_1058</name>
</gene>
<keyword id="KW-0030">Aminoacyl-tRNA synthetase</keyword>
<keyword id="KW-0067">ATP-binding</keyword>
<keyword id="KW-0963">Cytoplasm</keyword>
<keyword id="KW-0436">Ligase</keyword>
<keyword id="KW-0479">Metal-binding</keyword>
<keyword id="KW-0547">Nucleotide-binding</keyword>
<keyword id="KW-0648">Protein biosynthesis</keyword>
<keyword id="KW-0694">RNA-binding</keyword>
<keyword id="KW-0820">tRNA-binding</keyword>
<keyword id="KW-0862">Zinc</keyword>
<dbReference type="EC" id="6.1.1.7" evidence="1"/>
<dbReference type="EMBL" id="AE014074">
    <property type="protein sequence ID" value="AAM79665.1"/>
    <property type="status" value="ALT_INIT"/>
    <property type="molecule type" value="Genomic_DNA"/>
</dbReference>
<dbReference type="RefSeq" id="WP_011106720.1">
    <property type="nucleotide sequence ID" value="NC_004070.1"/>
</dbReference>
<dbReference type="SMR" id="P0DG24"/>
<dbReference type="KEGG" id="spg:SpyM3_1058"/>
<dbReference type="HOGENOM" id="CLU_004485_1_1_9"/>
<dbReference type="Proteomes" id="UP000000564">
    <property type="component" value="Chromosome"/>
</dbReference>
<dbReference type="GO" id="GO:0005829">
    <property type="term" value="C:cytosol"/>
    <property type="evidence" value="ECO:0007669"/>
    <property type="project" value="TreeGrafter"/>
</dbReference>
<dbReference type="GO" id="GO:0004813">
    <property type="term" value="F:alanine-tRNA ligase activity"/>
    <property type="evidence" value="ECO:0007669"/>
    <property type="project" value="UniProtKB-UniRule"/>
</dbReference>
<dbReference type="GO" id="GO:0002161">
    <property type="term" value="F:aminoacyl-tRNA deacylase activity"/>
    <property type="evidence" value="ECO:0007669"/>
    <property type="project" value="TreeGrafter"/>
</dbReference>
<dbReference type="GO" id="GO:0005524">
    <property type="term" value="F:ATP binding"/>
    <property type="evidence" value="ECO:0007669"/>
    <property type="project" value="UniProtKB-UniRule"/>
</dbReference>
<dbReference type="GO" id="GO:0140096">
    <property type="term" value="F:catalytic activity, acting on a protein"/>
    <property type="evidence" value="ECO:0007669"/>
    <property type="project" value="UniProtKB-ARBA"/>
</dbReference>
<dbReference type="GO" id="GO:0016740">
    <property type="term" value="F:transferase activity"/>
    <property type="evidence" value="ECO:0007669"/>
    <property type="project" value="UniProtKB-ARBA"/>
</dbReference>
<dbReference type="GO" id="GO:0000049">
    <property type="term" value="F:tRNA binding"/>
    <property type="evidence" value="ECO:0007669"/>
    <property type="project" value="UniProtKB-KW"/>
</dbReference>
<dbReference type="GO" id="GO:0008270">
    <property type="term" value="F:zinc ion binding"/>
    <property type="evidence" value="ECO:0007669"/>
    <property type="project" value="UniProtKB-UniRule"/>
</dbReference>
<dbReference type="GO" id="GO:0006419">
    <property type="term" value="P:alanyl-tRNA aminoacylation"/>
    <property type="evidence" value="ECO:0007669"/>
    <property type="project" value="UniProtKB-UniRule"/>
</dbReference>
<dbReference type="CDD" id="cd00673">
    <property type="entry name" value="AlaRS_core"/>
    <property type="match status" value="1"/>
</dbReference>
<dbReference type="FunFam" id="3.10.310.40:FF:000001">
    <property type="entry name" value="Alanine--tRNA ligase"/>
    <property type="match status" value="1"/>
</dbReference>
<dbReference type="FunFam" id="3.30.54.20:FF:000001">
    <property type="entry name" value="Alanine--tRNA ligase"/>
    <property type="match status" value="1"/>
</dbReference>
<dbReference type="FunFam" id="3.30.930.10:FF:000046">
    <property type="entry name" value="Alanine--tRNA ligase"/>
    <property type="match status" value="1"/>
</dbReference>
<dbReference type="FunFam" id="3.30.980.10:FF:000004">
    <property type="entry name" value="Alanine--tRNA ligase, cytoplasmic"/>
    <property type="match status" value="1"/>
</dbReference>
<dbReference type="Gene3D" id="2.40.30.130">
    <property type="match status" value="1"/>
</dbReference>
<dbReference type="Gene3D" id="3.10.310.40">
    <property type="match status" value="1"/>
</dbReference>
<dbReference type="Gene3D" id="3.30.54.20">
    <property type="match status" value="1"/>
</dbReference>
<dbReference type="Gene3D" id="6.10.250.550">
    <property type="match status" value="1"/>
</dbReference>
<dbReference type="Gene3D" id="3.30.930.10">
    <property type="entry name" value="Bira Bifunctional Protein, Domain 2"/>
    <property type="match status" value="1"/>
</dbReference>
<dbReference type="Gene3D" id="3.30.980.10">
    <property type="entry name" value="Threonyl-trna Synthetase, Chain A, domain 2"/>
    <property type="match status" value="1"/>
</dbReference>
<dbReference type="HAMAP" id="MF_00036_B">
    <property type="entry name" value="Ala_tRNA_synth_B"/>
    <property type="match status" value="1"/>
</dbReference>
<dbReference type="InterPro" id="IPR045864">
    <property type="entry name" value="aa-tRNA-synth_II/BPL/LPL"/>
</dbReference>
<dbReference type="InterPro" id="IPR002318">
    <property type="entry name" value="Ala-tRNA-lgiase_IIc"/>
</dbReference>
<dbReference type="InterPro" id="IPR018162">
    <property type="entry name" value="Ala-tRNA-ligase_IIc_anticod-bd"/>
</dbReference>
<dbReference type="InterPro" id="IPR018165">
    <property type="entry name" value="Ala-tRNA-synth_IIc_core"/>
</dbReference>
<dbReference type="InterPro" id="IPR018164">
    <property type="entry name" value="Ala-tRNA-synth_IIc_N"/>
</dbReference>
<dbReference type="InterPro" id="IPR050058">
    <property type="entry name" value="Ala-tRNA_ligase"/>
</dbReference>
<dbReference type="InterPro" id="IPR023033">
    <property type="entry name" value="Ala_tRNA_ligase_euk/bac"/>
</dbReference>
<dbReference type="InterPro" id="IPR003156">
    <property type="entry name" value="DHHA1_dom"/>
</dbReference>
<dbReference type="InterPro" id="IPR018163">
    <property type="entry name" value="Thr/Ala-tRNA-synth_IIc_edit"/>
</dbReference>
<dbReference type="InterPro" id="IPR009000">
    <property type="entry name" value="Transl_B-barrel_sf"/>
</dbReference>
<dbReference type="InterPro" id="IPR012947">
    <property type="entry name" value="tRNA_SAD"/>
</dbReference>
<dbReference type="NCBIfam" id="TIGR00344">
    <property type="entry name" value="alaS"/>
    <property type="match status" value="1"/>
</dbReference>
<dbReference type="PANTHER" id="PTHR11777:SF9">
    <property type="entry name" value="ALANINE--TRNA LIGASE, CYTOPLASMIC"/>
    <property type="match status" value="1"/>
</dbReference>
<dbReference type="PANTHER" id="PTHR11777">
    <property type="entry name" value="ALANYL-TRNA SYNTHETASE"/>
    <property type="match status" value="1"/>
</dbReference>
<dbReference type="Pfam" id="PF02272">
    <property type="entry name" value="DHHA1"/>
    <property type="match status" value="1"/>
</dbReference>
<dbReference type="Pfam" id="PF01411">
    <property type="entry name" value="tRNA-synt_2c"/>
    <property type="match status" value="1"/>
</dbReference>
<dbReference type="Pfam" id="PF07973">
    <property type="entry name" value="tRNA_SAD"/>
    <property type="match status" value="1"/>
</dbReference>
<dbReference type="PRINTS" id="PR00980">
    <property type="entry name" value="TRNASYNTHALA"/>
</dbReference>
<dbReference type="SMART" id="SM00863">
    <property type="entry name" value="tRNA_SAD"/>
    <property type="match status" value="1"/>
</dbReference>
<dbReference type="SUPFAM" id="SSF55681">
    <property type="entry name" value="Class II aaRS and biotin synthetases"/>
    <property type="match status" value="1"/>
</dbReference>
<dbReference type="SUPFAM" id="SSF101353">
    <property type="entry name" value="Putative anticodon-binding domain of alanyl-tRNA synthetase (AlaRS)"/>
    <property type="match status" value="1"/>
</dbReference>
<dbReference type="SUPFAM" id="SSF55186">
    <property type="entry name" value="ThrRS/AlaRS common domain"/>
    <property type="match status" value="1"/>
</dbReference>
<dbReference type="SUPFAM" id="SSF50447">
    <property type="entry name" value="Translation proteins"/>
    <property type="match status" value="1"/>
</dbReference>
<dbReference type="PROSITE" id="PS50860">
    <property type="entry name" value="AA_TRNA_LIGASE_II_ALA"/>
    <property type="match status" value="1"/>
</dbReference>
<sequence>MKELSSAQIRQMWLDFWKSKGHCVEPSANLVPVNDPTLLWINSGVATLKKYFDGSVIPENPRITNAQKSIRTNDIENVGKTARHHTMFEMLGNFSIGDYFRDEAIEWGFELLTSPDWFDFPKDKLYMTYYPDDKDSYNRWIACGVEPSHLVPIEDNFWEIGAGPSGPDTEIFFDRGEDFDPENIGLRLLAEDIENDRYIEIWNIVLSQFNADPAVPRSEYKELPNKNIDTGAGLERLAAVMQGAKTNFETDLFMPIIREVEKLSGKTYDPDGDNMSFKVIADHIRALSFAIGDGALPGNEGRGYVLRRLLRRAVMHGRRLGINETFLYKLVPTVGQIMESYYPEVLEKRDFIEKIVKREEETFARTIDAGSGHLDSLLAQLKAEGKDTLEGKDIFKLYDTYGFPVELTEELAEDAGYKIDHEGFKSAMKEQQDRARAAVVKGGSMGMQNETLAGIVEESRFEYDTYSLESSLSVIIADNERTEAVSEGQALLVFAQTPFYAEMGGQVADTGRIKNDKGDTVAEVVDVQKAPNGQPLHTVNVLASLSVGTNYTLEINKERRLAVEKNHTATHLLHAALHNVIGEHATQAGSLNEEEFLRFDFTHFEAVSNEELRHIEQEVNEQIWNALTITTTETDVETAKEMGAMALFGEKYGKVVRVVQIGNYSVELCGGTHLNNSSEIGLFKIVKEEGIGSGTRRIIAVTGRQAFEAYRNQEDALKDIAATVKAPQLKDAAAKVQALSDSLRDLQKENAELKEKAAAAAAGDVFKDVQEAKGVRFIASQVDVADAGALRTFADNWKQKDYSDVLVLVAAIGEKVNVLVASKTKDVHAGNMIKELAPIVAGRGGGKPDMAMAGGSDASKIAELLAAVAEIV</sequence>